<reference key="1">
    <citation type="journal article" date="2009" name="J. Bacteriol.">
        <title>Complete genome sequence and comparative genome analysis of enteropathogenic Escherichia coli O127:H6 strain E2348/69.</title>
        <authorList>
            <person name="Iguchi A."/>
            <person name="Thomson N.R."/>
            <person name="Ogura Y."/>
            <person name="Saunders D."/>
            <person name="Ooka T."/>
            <person name="Henderson I.R."/>
            <person name="Harris D."/>
            <person name="Asadulghani M."/>
            <person name="Kurokawa K."/>
            <person name="Dean P."/>
            <person name="Kenny B."/>
            <person name="Quail M.A."/>
            <person name="Thurston S."/>
            <person name="Dougan G."/>
            <person name="Hayashi T."/>
            <person name="Parkhill J."/>
            <person name="Frankel G."/>
        </authorList>
    </citation>
    <scope>NUCLEOTIDE SEQUENCE [LARGE SCALE GENOMIC DNA]</scope>
    <source>
        <strain>E2348/69 / EPEC</strain>
    </source>
</reference>
<proteinExistence type="inferred from homology"/>
<organism>
    <name type="scientific">Escherichia coli O127:H6 (strain E2348/69 / EPEC)</name>
    <dbReference type="NCBI Taxonomy" id="574521"/>
    <lineage>
        <taxon>Bacteria</taxon>
        <taxon>Pseudomonadati</taxon>
        <taxon>Pseudomonadota</taxon>
        <taxon>Gammaproteobacteria</taxon>
        <taxon>Enterobacterales</taxon>
        <taxon>Enterobacteriaceae</taxon>
        <taxon>Escherichia</taxon>
    </lineage>
</organism>
<dbReference type="EMBL" id="FM180568">
    <property type="protein sequence ID" value="CAS11434.1"/>
    <property type="molecule type" value="Genomic_DNA"/>
</dbReference>
<dbReference type="SMR" id="B7ULJ3"/>
<dbReference type="KEGG" id="ecg:E2348C_3886"/>
<dbReference type="HOGENOM" id="CLU_073529_0_1_6"/>
<dbReference type="Proteomes" id="UP000008205">
    <property type="component" value="Chromosome"/>
</dbReference>
<dbReference type="GO" id="GO:0046872">
    <property type="term" value="F:metal ion binding"/>
    <property type="evidence" value="ECO:0007669"/>
    <property type="project" value="UniProtKB-KW"/>
</dbReference>
<dbReference type="GO" id="GO:0008237">
    <property type="term" value="F:metallopeptidase activity"/>
    <property type="evidence" value="ECO:0007669"/>
    <property type="project" value="UniProtKB-KW"/>
</dbReference>
<dbReference type="GO" id="GO:0006508">
    <property type="term" value="P:proteolysis"/>
    <property type="evidence" value="ECO:0007669"/>
    <property type="project" value="UniProtKB-KW"/>
</dbReference>
<dbReference type="CDD" id="cd08071">
    <property type="entry name" value="MPN_DUF2466"/>
    <property type="match status" value="1"/>
</dbReference>
<dbReference type="Gene3D" id="3.40.140.10">
    <property type="entry name" value="Cytidine Deaminase, domain 2"/>
    <property type="match status" value="1"/>
</dbReference>
<dbReference type="HAMAP" id="MF_00018">
    <property type="entry name" value="UPF0758_YicR"/>
    <property type="match status" value="1"/>
</dbReference>
<dbReference type="InterPro" id="IPR037518">
    <property type="entry name" value="MPN"/>
</dbReference>
<dbReference type="InterPro" id="IPR025657">
    <property type="entry name" value="RadC_JAB"/>
</dbReference>
<dbReference type="InterPro" id="IPR010994">
    <property type="entry name" value="RuvA_2-like"/>
</dbReference>
<dbReference type="InterPro" id="IPR001405">
    <property type="entry name" value="UPF0758"/>
</dbReference>
<dbReference type="InterPro" id="IPR020891">
    <property type="entry name" value="UPF0758_CS"/>
</dbReference>
<dbReference type="InterPro" id="IPR046778">
    <property type="entry name" value="UPF0758_N"/>
</dbReference>
<dbReference type="InterPro" id="IPR022820">
    <property type="entry name" value="UPF0758_YicR"/>
</dbReference>
<dbReference type="NCBIfam" id="NF000642">
    <property type="entry name" value="PRK00024.1"/>
    <property type="match status" value="1"/>
</dbReference>
<dbReference type="NCBIfam" id="TIGR00608">
    <property type="entry name" value="radc"/>
    <property type="match status" value="1"/>
</dbReference>
<dbReference type="PANTHER" id="PTHR30471">
    <property type="entry name" value="DNA REPAIR PROTEIN RADC"/>
    <property type="match status" value="1"/>
</dbReference>
<dbReference type="PANTHER" id="PTHR30471:SF3">
    <property type="entry name" value="UPF0758 PROTEIN YEES-RELATED"/>
    <property type="match status" value="1"/>
</dbReference>
<dbReference type="Pfam" id="PF04002">
    <property type="entry name" value="RadC"/>
    <property type="match status" value="1"/>
</dbReference>
<dbReference type="Pfam" id="PF20582">
    <property type="entry name" value="UPF0758_N"/>
    <property type="match status" value="1"/>
</dbReference>
<dbReference type="SUPFAM" id="SSF47781">
    <property type="entry name" value="RuvA domain 2-like"/>
    <property type="match status" value="1"/>
</dbReference>
<dbReference type="PROSITE" id="PS50249">
    <property type="entry name" value="MPN"/>
    <property type="match status" value="1"/>
</dbReference>
<dbReference type="PROSITE" id="PS01302">
    <property type="entry name" value="UPF0758"/>
    <property type="match status" value="1"/>
</dbReference>
<gene>
    <name evidence="1" type="primary">yicR</name>
    <name type="ordered locus">E2348C_3886</name>
</gene>
<protein>
    <recommendedName>
        <fullName evidence="1">UPF0758 protein YicR</fullName>
    </recommendedName>
</protein>
<sequence length="222" mass="25258">MKNNAQLLMPREKMLKFGISALTDVELLALFLRTGTRGKDVLTLAKEMLENFGSLYGLLTSEYEQFSGVHGIGVAKFAQLKGIAELARRYYNVRMREESPLLSPEMTREFLQSQLTGEEREIFMVIFLDSQHRVITHSRLFSGTLNHVEVHPREIIREAIKINASALILAHNHPSGCAEPSKADKLITERIIKSCQFMDLRVLDHIVIGRGEYVSFAERGWI</sequence>
<keyword id="KW-0378">Hydrolase</keyword>
<keyword id="KW-0479">Metal-binding</keyword>
<keyword id="KW-0482">Metalloprotease</keyword>
<keyword id="KW-0645">Protease</keyword>
<keyword id="KW-1185">Reference proteome</keyword>
<keyword id="KW-0862">Zinc</keyword>
<accession>B7ULJ3</accession>
<comment type="similarity">
    <text evidence="1">Belongs to the UPF0758 family. YicR subfamily.</text>
</comment>
<evidence type="ECO:0000255" key="1">
    <source>
        <dbReference type="HAMAP-Rule" id="MF_00018"/>
    </source>
</evidence>
<evidence type="ECO:0000255" key="2">
    <source>
        <dbReference type="PROSITE-ProRule" id="PRU01182"/>
    </source>
</evidence>
<name>YICR_ECO27</name>
<feature type="chain" id="PRO_1000195296" description="UPF0758 protein YicR">
    <location>
        <begin position="1"/>
        <end position="222"/>
    </location>
</feature>
<feature type="domain" description="MPN" evidence="2">
    <location>
        <begin position="100"/>
        <end position="222"/>
    </location>
</feature>
<feature type="short sequence motif" description="JAMM motif" evidence="2">
    <location>
        <begin position="171"/>
        <end position="184"/>
    </location>
</feature>
<feature type="binding site" evidence="2">
    <location>
        <position position="171"/>
    </location>
    <ligand>
        <name>Zn(2+)</name>
        <dbReference type="ChEBI" id="CHEBI:29105"/>
        <note>catalytic</note>
    </ligand>
</feature>
<feature type="binding site" evidence="2">
    <location>
        <position position="173"/>
    </location>
    <ligand>
        <name>Zn(2+)</name>
        <dbReference type="ChEBI" id="CHEBI:29105"/>
        <note>catalytic</note>
    </ligand>
</feature>
<feature type="binding site" evidence="2">
    <location>
        <position position="184"/>
    </location>
    <ligand>
        <name>Zn(2+)</name>
        <dbReference type="ChEBI" id="CHEBI:29105"/>
        <note>catalytic</note>
    </ligand>
</feature>